<reference key="1">
    <citation type="submission" date="2008-02" db="EMBL/GenBank/DDBJ databases">
        <title>Complete sequence of Yersinia pseudotuberculosis YPIII.</title>
        <authorList>
            <consortium name="US DOE Joint Genome Institute"/>
            <person name="Copeland A."/>
            <person name="Lucas S."/>
            <person name="Lapidus A."/>
            <person name="Glavina del Rio T."/>
            <person name="Dalin E."/>
            <person name="Tice H."/>
            <person name="Bruce D."/>
            <person name="Goodwin L."/>
            <person name="Pitluck S."/>
            <person name="Munk A.C."/>
            <person name="Brettin T."/>
            <person name="Detter J.C."/>
            <person name="Han C."/>
            <person name="Tapia R."/>
            <person name="Schmutz J."/>
            <person name="Larimer F."/>
            <person name="Land M."/>
            <person name="Hauser L."/>
            <person name="Challacombe J.F."/>
            <person name="Green L."/>
            <person name="Lindler L.E."/>
            <person name="Nikolich M.P."/>
            <person name="Richardson P."/>
        </authorList>
    </citation>
    <scope>NUCLEOTIDE SEQUENCE [LARGE SCALE GENOMIC DNA]</scope>
    <source>
        <strain>YPIII</strain>
    </source>
</reference>
<comment type="function">
    <text evidence="1">Part of the Sec protein translocase complex. Interacts with the SecYEG preprotein conducting channel. Has a central role in coupling the hydrolysis of ATP to the transfer of proteins into and across the cell membrane, serving both as a receptor for the preprotein-SecB complex and as an ATP-driven molecular motor driving the stepwise translocation of polypeptide chains across the membrane.</text>
</comment>
<comment type="catalytic activity">
    <reaction evidence="1">
        <text>ATP + H2O + cellular proteinSide 1 = ADP + phosphate + cellular proteinSide 2.</text>
        <dbReference type="EC" id="7.4.2.8"/>
    </reaction>
</comment>
<comment type="cofactor">
    <cofactor evidence="1">
        <name>Zn(2+)</name>
        <dbReference type="ChEBI" id="CHEBI:29105"/>
    </cofactor>
    <text evidence="1">May bind 1 zinc ion per subunit.</text>
</comment>
<comment type="subunit">
    <text evidence="1">Monomer and homodimer. Part of the essential Sec protein translocation apparatus which comprises SecA, SecYEG and auxiliary proteins SecDF-YajC and YidC.</text>
</comment>
<comment type="subcellular location">
    <subcellularLocation>
        <location evidence="1">Cell inner membrane</location>
        <topology evidence="1">Peripheral membrane protein</topology>
        <orientation evidence="1">Cytoplasmic side</orientation>
    </subcellularLocation>
    <subcellularLocation>
        <location evidence="1">Cytoplasm</location>
    </subcellularLocation>
    <text evidence="1">Distribution is 50-50.</text>
</comment>
<comment type="induction">
    <text evidence="1">Repressed under conditions of excess protein secretion capacity and derepressed when protein secretion becomes limiting. This is regulated by SecM.</text>
</comment>
<comment type="similarity">
    <text evidence="1">Belongs to the SecA family.</text>
</comment>
<evidence type="ECO:0000255" key="1">
    <source>
        <dbReference type="HAMAP-Rule" id="MF_01382"/>
    </source>
</evidence>
<evidence type="ECO:0000256" key="2">
    <source>
        <dbReference type="SAM" id="MobiDB-lite"/>
    </source>
</evidence>
<protein>
    <recommendedName>
        <fullName evidence="1">Protein translocase subunit SecA</fullName>
        <ecNumber evidence="1">7.4.2.8</ecNumber>
    </recommendedName>
</protein>
<proteinExistence type="inferred from homology"/>
<dbReference type="EC" id="7.4.2.8" evidence="1"/>
<dbReference type="EMBL" id="CP000950">
    <property type="protein sequence ID" value="ACA69776.1"/>
    <property type="molecule type" value="Genomic_DNA"/>
</dbReference>
<dbReference type="RefSeq" id="WP_002210426.1">
    <property type="nucleotide sequence ID" value="NZ_CP009792.1"/>
</dbReference>
<dbReference type="SMR" id="B1JK72"/>
<dbReference type="GeneID" id="57974051"/>
<dbReference type="KEGG" id="ypy:YPK_3509"/>
<dbReference type="PATRIC" id="fig|502800.11.peg.4251"/>
<dbReference type="GO" id="GO:0031522">
    <property type="term" value="C:cell envelope Sec protein transport complex"/>
    <property type="evidence" value="ECO:0007669"/>
    <property type="project" value="TreeGrafter"/>
</dbReference>
<dbReference type="GO" id="GO:0005829">
    <property type="term" value="C:cytosol"/>
    <property type="evidence" value="ECO:0007669"/>
    <property type="project" value="TreeGrafter"/>
</dbReference>
<dbReference type="GO" id="GO:0005886">
    <property type="term" value="C:plasma membrane"/>
    <property type="evidence" value="ECO:0007669"/>
    <property type="project" value="UniProtKB-SubCell"/>
</dbReference>
<dbReference type="GO" id="GO:0005524">
    <property type="term" value="F:ATP binding"/>
    <property type="evidence" value="ECO:0007669"/>
    <property type="project" value="UniProtKB-UniRule"/>
</dbReference>
<dbReference type="GO" id="GO:0046872">
    <property type="term" value="F:metal ion binding"/>
    <property type="evidence" value="ECO:0007669"/>
    <property type="project" value="UniProtKB-KW"/>
</dbReference>
<dbReference type="GO" id="GO:0008564">
    <property type="term" value="F:protein-exporting ATPase activity"/>
    <property type="evidence" value="ECO:0007669"/>
    <property type="project" value="UniProtKB-EC"/>
</dbReference>
<dbReference type="GO" id="GO:0065002">
    <property type="term" value="P:intracellular protein transmembrane transport"/>
    <property type="evidence" value="ECO:0007669"/>
    <property type="project" value="UniProtKB-UniRule"/>
</dbReference>
<dbReference type="GO" id="GO:0017038">
    <property type="term" value="P:protein import"/>
    <property type="evidence" value="ECO:0007669"/>
    <property type="project" value="InterPro"/>
</dbReference>
<dbReference type="GO" id="GO:0006605">
    <property type="term" value="P:protein targeting"/>
    <property type="evidence" value="ECO:0007669"/>
    <property type="project" value="UniProtKB-UniRule"/>
</dbReference>
<dbReference type="GO" id="GO:0043952">
    <property type="term" value="P:protein transport by the Sec complex"/>
    <property type="evidence" value="ECO:0007669"/>
    <property type="project" value="TreeGrafter"/>
</dbReference>
<dbReference type="CDD" id="cd17928">
    <property type="entry name" value="DEXDc_SecA"/>
    <property type="match status" value="1"/>
</dbReference>
<dbReference type="CDD" id="cd18803">
    <property type="entry name" value="SF2_C_secA"/>
    <property type="match status" value="1"/>
</dbReference>
<dbReference type="FunFam" id="1.10.3060.10:FF:000001">
    <property type="entry name" value="Preprotein translocase subunit SecA"/>
    <property type="match status" value="1"/>
</dbReference>
<dbReference type="FunFam" id="3.40.50.300:FF:000081">
    <property type="entry name" value="Preprotein translocase subunit SecA"/>
    <property type="match status" value="1"/>
</dbReference>
<dbReference type="FunFam" id="3.40.50.300:FF:000113">
    <property type="entry name" value="Preprotein translocase subunit SecA"/>
    <property type="match status" value="1"/>
</dbReference>
<dbReference type="FunFam" id="3.90.1440.10:FF:000001">
    <property type="entry name" value="Preprotein translocase subunit SecA"/>
    <property type="match status" value="1"/>
</dbReference>
<dbReference type="Gene3D" id="1.10.3060.10">
    <property type="entry name" value="Helical scaffold and wing domains of SecA"/>
    <property type="match status" value="1"/>
</dbReference>
<dbReference type="Gene3D" id="3.40.50.300">
    <property type="entry name" value="P-loop containing nucleotide triphosphate hydrolases"/>
    <property type="match status" value="2"/>
</dbReference>
<dbReference type="Gene3D" id="3.90.1440.10">
    <property type="entry name" value="SecA, preprotein cross-linking domain"/>
    <property type="match status" value="1"/>
</dbReference>
<dbReference type="HAMAP" id="MF_01382">
    <property type="entry name" value="SecA"/>
    <property type="match status" value="1"/>
</dbReference>
<dbReference type="InterPro" id="IPR014001">
    <property type="entry name" value="Helicase_ATP-bd"/>
</dbReference>
<dbReference type="InterPro" id="IPR027417">
    <property type="entry name" value="P-loop_NTPase"/>
</dbReference>
<dbReference type="InterPro" id="IPR004027">
    <property type="entry name" value="SEC_C_motif"/>
</dbReference>
<dbReference type="InterPro" id="IPR000185">
    <property type="entry name" value="SecA"/>
</dbReference>
<dbReference type="InterPro" id="IPR020937">
    <property type="entry name" value="SecA_CS"/>
</dbReference>
<dbReference type="InterPro" id="IPR011115">
    <property type="entry name" value="SecA_DEAD"/>
</dbReference>
<dbReference type="InterPro" id="IPR014018">
    <property type="entry name" value="SecA_motor_DEAD"/>
</dbReference>
<dbReference type="InterPro" id="IPR011130">
    <property type="entry name" value="SecA_preprotein_X-link_dom"/>
</dbReference>
<dbReference type="InterPro" id="IPR044722">
    <property type="entry name" value="SecA_SF2_C"/>
</dbReference>
<dbReference type="InterPro" id="IPR011116">
    <property type="entry name" value="SecA_Wing/Scaffold"/>
</dbReference>
<dbReference type="InterPro" id="IPR036266">
    <property type="entry name" value="SecA_Wing/Scaffold_sf"/>
</dbReference>
<dbReference type="InterPro" id="IPR036670">
    <property type="entry name" value="SecA_X-link_sf"/>
</dbReference>
<dbReference type="NCBIfam" id="NF009538">
    <property type="entry name" value="PRK12904.1"/>
    <property type="match status" value="1"/>
</dbReference>
<dbReference type="NCBIfam" id="TIGR00963">
    <property type="entry name" value="secA"/>
    <property type="match status" value="1"/>
</dbReference>
<dbReference type="PANTHER" id="PTHR30612:SF0">
    <property type="entry name" value="CHLOROPLAST PROTEIN-TRANSPORTING ATPASE"/>
    <property type="match status" value="1"/>
</dbReference>
<dbReference type="PANTHER" id="PTHR30612">
    <property type="entry name" value="SECA INNER MEMBRANE COMPONENT OF SEC PROTEIN SECRETION SYSTEM"/>
    <property type="match status" value="1"/>
</dbReference>
<dbReference type="Pfam" id="PF21090">
    <property type="entry name" value="P-loop_SecA"/>
    <property type="match status" value="1"/>
</dbReference>
<dbReference type="Pfam" id="PF02810">
    <property type="entry name" value="SEC-C"/>
    <property type="match status" value="1"/>
</dbReference>
<dbReference type="Pfam" id="PF07517">
    <property type="entry name" value="SecA_DEAD"/>
    <property type="match status" value="1"/>
</dbReference>
<dbReference type="Pfam" id="PF01043">
    <property type="entry name" value="SecA_PP_bind"/>
    <property type="match status" value="1"/>
</dbReference>
<dbReference type="Pfam" id="PF07516">
    <property type="entry name" value="SecA_SW"/>
    <property type="match status" value="1"/>
</dbReference>
<dbReference type="PRINTS" id="PR00906">
    <property type="entry name" value="SECA"/>
</dbReference>
<dbReference type="SMART" id="SM00957">
    <property type="entry name" value="SecA_DEAD"/>
    <property type="match status" value="1"/>
</dbReference>
<dbReference type="SMART" id="SM00958">
    <property type="entry name" value="SecA_PP_bind"/>
    <property type="match status" value="1"/>
</dbReference>
<dbReference type="SUPFAM" id="SSF81886">
    <property type="entry name" value="Helical scaffold and wing domains of SecA"/>
    <property type="match status" value="1"/>
</dbReference>
<dbReference type="SUPFAM" id="SSF52540">
    <property type="entry name" value="P-loop containing nucleoside triphosphate hydrolases"/>
    <property type="match status" value="2"/>
</dbReference>
<dbReference type="SUPFAM" id="SSF81767">
    <property type="entry name" value="Pre-protein crosslinking domain of SecA"/>
    <property type="match status" value="1"/>
</dbReference>
<dbReference type="PROSITE" id="PS01312">
    <property type="entry name" value="SECA"/>
    <property type="match status" value="1"/>
</dbReference>
<dbReference type="PROSITE" id="PS51196">
    <property type="entry name" value="SECA_MOTOR_DEAD"/>
    <property type="match status" value="1"/>
</dbReference>
<organism>
    <name type="scientific">Yersinia pseudotuberculosis serotype O:3 (strain YPIII)</name>
    <dbReference type="NCBI Taxonomy" id="502800"/>
    <lineage>
        <taxon>Bacteria</taxon>
        <taxon>Pseudomonadati</taxon>
        <taxon>Pseudomonadota</taxon>
        <taxon>Gammaproteobacteria</taxon>
        <taxon>Enterobacterales</taxon>
        <taxon>Yersiniaceae</taxon>
        <taxon>Yersinia</taxon>
    </lineage>
</organism>
<feature type="chain" id="PRO_1000145083" description="Protein translocase subunit SecA">
    <location>
        <begin position="1"/>
        <end position="904"/>
    </location>
</feature>
<feature type="region of interest" description="Disordered" evidence="2">
    <location>
        <begin position="851"/>
        <end position="870"/>
    </location>
</feature>
<feature type="binding site" evidence="1">
    <location>
        <position position="87"/>
    </location>
    <ligand>
        <name>ATP</name>
        <dbReference type="ChEBI" id="CHEBI:30616"/>
    </ligand>
</feature>
<feature type="binding site" evidence="1">
    <location>
        <begin position="105"/>
        <end position="109"/>
    </location>
    <ligand>
        <name>ATP</name>
        <dbReference type="ChEBI" id="CHEBI:30616"/>
    </ligand>
</feature>
<feature type="binding site" evidence="1">
    <location>
        <position position="512"/>
    </location>
    <ligand>
        <name>ATP</name>
        <dbReference type="ChEBI" id="CHEBI:30616"/>
    </ligand>
</feature>
<feature type="binding site" evidence="1">
    <location>
        <position position="888"/>
    </location>
    <ligand>
        <name>Zn(2+)</name>
        <dbReference type="ChEBI" id="CHEBI:29105"/>
    </ligand>
</feature>
<feature type="binding site" evidence="1">
    <location>
        <position position="890"/>
    </location>
    <ligand>
        <name>Zn(2+)</name>
        <dbReference type="ChEBI" id="CHEBI:29105"/>
    </ligand>
</feature>
<feature type="binding site" evidence="1">
    <location>
        <position position="899"/>
    </location>
    <ligand>
        <name>Zn(2+)</name>
        <dbReference type="ChEBI" id="CHEBI:29105"/>
    </ligand>
</feature>
<feature type="binding site" evidence="1">
    <location>
        <position position="900"/>
    </location>
    <ligand>
        <name>Zn(2+)</name>
        <dbReference type="ChEBI" id="CHEBI:29105"/>
    </ligand>
</feature>
<gene>
    <name evidence="1" type="primary">secA</name>
    <name type="ordered locus">YPK_3509</name>
</gene>
<accession>B1JK72</accession>
<keyword id="KW-0067">ATP-binding</keyword>
<keyword id="KW-0997">Cell inner membrane</keyword>
<keyword id="KW-1003">Cell membrane</keyword>
<keyword id="KW-0963">Cytoplasm</keyword>
<keyword id="KW-0472">Membrane</keyword>
<keyword id="KW-0479">Metal-binding</keyword>
<keyword id="KW-0547">Nucleotide-binding</keyword>
<keyword id="KW-0653">Protein transport</keyword>
<keyword id="KW-1278">Translocase</keyword>
<keyword id="KW-0811">Translocation</keyword>
<keyword id="KW-0813">Transport</keyword>
<keyword id="KW-0862">Zinc</keyword>
<sequence length="904" mass="102625">MLIKLLTKVFGSRNDRTLRRMQKVVDVINRMEPDIEKLTDTELRAKTDEFRERLAKGEVLENLIPEAFAVVREASKRVFGMRHFDVQLLGGMVLNERCIAEMRTGEGKTLTATLPAYLNALSGRGVHVVTVNDYLAQRDAENNRPLFEFLGLSIGINLPNMTAPAKRAAYAADITYGTNNEFGFDYLRDNMAFSPEERVQRQLHYALVDEVDSILIDEARTPLIISGPAEDSSEMYIRVNKLIPKLIRQEKEDSDSFQGEGHFSVDEKSRQVHLTERGLILIEQMLVEAGIMDEGESLYSPANIMLMHHVTAALRAHVLFTRDVDYIVKDGEVIIVDEHTGRTMQGRRWSDGLHQAVEAKEGVEIQNENQTLASITFQNYFRLYEKLAGMTGTADTEAFEFSSIYKLDTIVVPTNRPMIRKDLADLVYMTEQEKIGAIIEDIRERTANGQPVLVGTISIEKSEVVSAELTKAGIEHKVLNAKFHAMEAEIVSQAGQPGAVTIATNMAGRGTDIVLGGSWQSEIAALEDPTEEQIAAIKAAWQIRHDAVLASGGLHIIGTERHESRRIDNQLRGRAGRQGDAGSSRFYLSMEDALMRIFASDRVSGMMRKLGMKPGEAIEHPWVTKAIANAQRKVESRNFDIRKQLLEYDDVANDQRRAIYSQRNELLDVSDVSETINSIREDVFKTTIDSYIPTQSLEEMWDIEGLEQRLKNDFDLDMPIAKWLEDEPQLHEETLRERILQQAIETYQRKEEVVGIEMMRNFEKGVMLQTLDSLWKEHLAAMDYLRQGIHLRGYAQKDPKQEYKRESFAMFAAMLESLKYEVISVLSKVQVRMPEEVEALEVQRREEAERLARQQQLSHQTDNSALMSEEEVKVANSLERKVGRNDPCPCGSGKKYKQCHGRLQ</sequence>
<name>SECA_YERPY</name>